<comment type="function">
    <text evidence="2 5 9 12">Catalyzes the sodium-dependent uptake of extracellular L-proline (PubMed:1567896, PubMed:3512540, PubMed:9693004). This protein is also capable of using lithium as the transport cation (PubMed:1567896, PubMed:9693004). Also catalyzes the uptake of propionate (PubMed:17088549).</text>
</comment>
<comment type="catalytic activity">
    <reaction evidence="2 9 12">
        <text>L-proline(in) + Na(+)(in) = L-proline(out) + Na(+)(out)</text>
        <dbReference type="Rhea" id="RHEA:28967"/>
        <dbReference type="ChEBI" id="CHEBI:29101"/>
        <dbReference type="ChEBI" id="CHEBI:60039"/>
    </reaction>
</comment>
<comment type="activity regulation">
    <text evidence="2 8 9">Activity is stimulated by phosphatidylethanolamine and phosphatidylglycerol, but not by phosphatidylcholine and cardiolipin (PubMed:3512540). Proline uptake is inhibited by the sulfhydryl reagent N-ethylmaleimide (NEM) (PubMed:1567896, PubMed:3053687). Proline, in the presence of Na(+) or Li(+), protects the carrier functions from NEM-inactivation (PubMed:1567896).</text>
</comment>
<comment type="biophysicochemical properties">
    <kinetics>
        <KM evidence="9">0.5 uM for L-proline</KM>
        <KM evidence="12">2 uM for L-proline (for Na(+)-driven transport)</KM>
        <KM evidence="12">31 uM for Na(+) (in intact cells)</KM>
        <KM evidence="12">730 uM for Na(+) (for reconstituted PutP in proteoliposomes)</KM>
        <Vmax evidence="9">16.0 nmol/min/mg enzyme</Vmax>
        <Vmax evidence="12">1130.0 nmol/min/mg enzyme (for Na(+)-driven transport)</Vmax>
    </kinetics>
    <phDependence>
        <text evidence="9">Optimum pH is 7.0.</text>
    </phDependence>
</comment>
<comment type="subunit">
    <text evidence="4">Has been isolated from inner membrane preparations as a homodimer.</text>
</comment>
<comment type="subcellular location">
    <subcellularLocation>
        <location evidence="4 6 9 10 13">Cell inner membrane</location>
        <topology evidence="4 13">Multi-pass membrane protein</topology>
    </subcellularLocation>
</comment>
<comment type="induction">
    <text evidence="5">Up-regulated by propionate.</text>
</comment>
<comment type="disruption phenotype">
    <text evidence="5 6">Mutant is defective in proline transport (PubMed:3007935). Shows reduced growth rate when grown on propionate as sole carbon source (PubMed:17088549).</text>
</comment>
<comment type="similarity">
    <text evidence="16">Belongs to the sodium:solute symporter (SSF) (TC 2.A.21) family.</text>
</comment>
<name>PUTP_ECOLI</name>
<dbReference type="EMBL" id="X05653">
    <property type="protein sequence ID" value="CAA29143.1"/>
    <property type="molecule type" value="Genomic_DNA"/>
</dbReference>
<dbReference type="EMBL" id="U00096">
    <property type="protein sequence ID" value="AAC74100.1"/>
    <property type="molecule type" value="Genomic_DNA"/>
</dbReference>
<dbReference type="EMBL" id="AP009048">
    <property type="protein sequence ID" value="BAA35793.1"/>
    <property type="molecule type" value="Genomic_DNA"/>
</dbReference>
<dbReference type="EMBL" id="L01150">
    <property type="protein sequence ID" value="AAA24463.1"/>
    <property type="molecule type" value="Genomic_DNA"/>
</dbReference>
<dbReference type="EMBL" id="L01151">
    <property type="protein sequence ID" value="AAA24464.1"/>
    <property type="molecule type" value="Genomic_DNA"/>
</dbReference>
<dbReference type="EMBL" id="M35174">
    <property type="protein sequence ID" value="AAA24458.1"/>
    <property type="molecule type" value="Genomic_DNA"/>
</dbReference>
<dbReference type="PIR" id="A30258">
    <property type="entry name" value="JGECPP"/>
</dbReference>
<dbReference type="RefSeq" id="NP_415535.1">
    <property type="nucleotide sequence ID" value="NC_000913.3"/>
</dbReference>
<dbReference type="RefSeq" id="WP_001018479.1">
    <property type="nucleotide sequence ID" value="NZ_SSZK01000002.1"/>
</dbReference>
<dbReference type="SMR" id="P07117"/>
<dbReference type="BioGRID" id="4260051">
    <property type="interactions" value="14"/>
</dbReference>
<dbReference type="BioGRID" id="849976">
    <property type="interactions" value="3"/>
</dbReference>
<dbReference type="FunCoup" id="P07117">
    <property type="interactions" value="256"/>
</dbReference>
<dbReference type="IntAct" id="P07117">
    <property type="interactions" value="4"/>
</dbReference>
<dbReference type="STRING" id="511145.b1015"/>
<dbReference type="TCDB" id="2.A.21.2.1">
    <property type="family name" value="the solute:sodium symporter (sss) family"/>
</dbReference>
<dbReference type="PaxDb" id="511145-b1015"/>
<dbReference type="EnsemblBacteria" id="AAC74100">
    <property type="protein sequence ID" value="AAC74100"/>
    <property type="gene ID" value="b1015"/>
</dbReference>
<dbReference type="GeneID" id="945602"/>
<dbReference type="KEGG" id="ecj:JW1001"/>
<dbReference type="KEGG" id="eco:b1015"/>
<dbReference type="KEGG" id="ecoc:C3026_06175"/>
<dbReference type="PATRIC" id="fig|1411691.4.peg.1254"/>
<dbReference type="EchoBASE" id="EB0795"/>
<dbReference type="eggNOG" id="COG0591">
    <property type="taxonomic scope" value="Bacteria"/>
</dbReference>
<dbReference type="HOGENOM" id="CLU_018808_15_2_6"/>
<dbReference type="InParanoid" id="P07117"/>
<dbReference type="OMA" id="NWVFVAK"/>
<dbReference type="OrthoDB" id="9789704at2"/>
<dbReference type="PhylomeDB" id="P07117"/>
<dbReference type="BioCyc" id="EcoCyc:PUTP-MONOMER"/>
<dbReference type="BioCyc" id="MetaCyc:PUTP-MONOMER"/>
<dbReference type="PRO" id="PR:P07117"/>
<dbReference type="Proteomes" id="UP000000625">
    <property type="component" value="Chromosome"/>
</dbReference>
<dbReference type="GO" id="GO:0005886">
    <property type="term" value="C:plasma membrane"/>
    <property type="evidence" value="ECO:0000314"/>
    <property type="project" value="EcoCyc"/>
</dbReference>
<dbReference type="GO" id="GO:0015193">
    <property type="term" value="F:L-proline transmembrane transporter activity"/>
    <property type="evidence" value="ECO:0000318"/>
    <property type="project" value="GO_Central"/>
</dbReference>
<dbReference type="GO" id="GO:0005298">
    <property type="term" value="F:proline:sodium symporter activity"/>
    <property type="evidence" value="ECO:0000314"/>
    <property type="project" value="EcoCyc"/>
</dbReference>
<dbReference type="GO" id="GO:0031402">
    <property type="term" value="F:sodium ion binding"/>
    <property type="evidence" value="ECO:0007669"/>
    <property type="project" value="InterPro"/>
</dbReference>
<dbReference type="GO" id="GO:0015824">
    <property type="term" value="P:proline transport"/>
    <property type="evidence" value="ECO:0000314"/>
    <property type="project" value="EcoCyc"/>
</dbReference>
<dbReference type="GO" id="GO:0015912">
    <property type="term" value="P:short-chain fatty acid transport"/>
    <property type="evidence" value="ECO:0000315"/>
    <property type="project" value="EcoCyc"/>
</dbReference>
<dbReference type="GO" id="GO:0055085">
    <property type="term" value="P:transmembrane transport"/>
    <property type="evidence" value="ECO:0000318"/>
    <property type="project" value="GO_Central"/>
</dbReference>
<dbReference type="CDD" id="cd11475">
    <property type="entry name" value="SLC5sbd_PutP"/>
    <property type="match status" value="1"/>
</dbReference>
<dbReference type="FunFam" id="1.20.1730.10:FF:000002">
    <property type="entry name" value="Sodium/proline symporter"/>
    <property type="match status" value="1"/>
</dbReference>
<dbReference type="Gene3D" id="1.20.1730.10">
    <property type="entry name" value="Sodium/glucose cotransporter"/>
    <property type="match status" value="1"/>
</dbReference>
<dbReference type="InterPro" id="IPR038377">
    <property type="entry name" value="Na/Glc_symporter_sf"/>
</dbReference>
<dbReference type="InterPro" id="IPR011851">
    <property type="entry name" value="Na/Pro_symporter"/>
</dbReference>
<dbReference type="InterPro" id="IPR001734">
    <property type="entry name" value="Na/solute_symporter"/>
</dbReference>
<dbReference type="InterPro" id="IPR018212">
    <property type="entry name" value="Na/solute_symporter_CS"/>
</dbReference>
<dbReference type="InterPro" id="IPR050277">
    <property type="entry name" value="Sodium:Solute_Symporter"/>
</dbReference>
<dbReference type="NCBIfam" id="TIGR02121">
    <property type="entry name" value="Na_Pro_sym"/>
    <property type="match status" value="1"/>
</dbReference>
<dbReference type="NCBIfam" id="NF011948">
    <property type="entry name" value="PRK15419.1"/>
    <property type="match status" value="1"/>
</dbReference>
<dbReference type="NCBIfam" id="TIGR00813">
    <property type="entry name" value="sss"/>
    <property type="match status" value="1"/>
</dbReference>
<dbReference type="PANTHER" id="PTHR48086">
    <property type="entry name" value="SODIUM/PROLINE SYMPORTER-RELATED"/>
    <property type="match status" value="1"/>
</dbReference>
<dbReference type="PANTHER" id="PTHR48086:SF3">
    <property type="entry name" value="SODIUM_PROLINE SYMPORTER"/>
    <property type="match status" value="1"/>
</dbReference>
<dbReference type="Pfam" id="PF00474">
    <property type="entry name" value="SSF"/>
    <property type="match status" value="1"/>
</dbReference>
<dbReference type="PROSITE" id="PS00456">
    <property type="entry name" value="NA_SOLUT_SYMP_1"/>
    <property type="match status" value="1"/>
</dbReference>
<dbReference type="PROSITE" id="PS00457">
    <property type="entry name" value="NA_SOLUT_SYMP_2"/>
    <property type="match status" value="1"/>
</dbReference>
<dbReference type="PROSITE" id="PS50283">
    <property type="entry name" value="NA_SOLUT_SYMP_3"/>
    <property type="match status" value="1"/>
</dbReference>
<keyword id="KW-0029">Amino-acid transport</keyword>
<keyword id="KW-0997">Cell inner membrane</keyword>
<keyword id="KW-1003">Cell membrane</keyword>
<keyword id="KW-0903">Direct protein sequencing</keyword>
<keyword id="KW-0406">Ion transport</keyword>
<keyword id="KW-0472">Membrane</keyword>
<keyword id="KW-1185">Reference proteome</keyword>
<keyword id="KW-0915">Sodium</keyword>
<keyword id="KW-0739">Sodium transport</keyword>
<keyword id="KW-0769">Symport</keyword>
<keyword id="KW-0812">Transmembrane</keyword>
<keyword id="KW-1133">Transmembrane helix</keyword>
<keyword id="KW-0813">Transport</keyword>
<sequence length="502" mass="54344">MAISTPMLVTFCVYIFGMILIGFIAWRSTKNFDDYILGGRSLGPFVTALSAGASDMSGWLLMGLPGAVFLSGISESWIAIGLTLGAWINWKLVAGRLRVHTEYNNNALTLPDYFTGRFEDKSRILRIISALVILLFFTIYCASGIVAGARLFESTFGMSYETALWAGAAATILYTFIGGFLAVSWTDTVQASLMIFALILTPVIVIISVGGFGDSLEVIKQKSIENVDMLKGLNFVAIISLMGWGLGYFGQPHILARFMAADSHHSIVHARRISMTWMILCLAGAVAVGFFGIAYFNDHPALAGAVNQNAERVFIELAQILFNPWIAGILLSAILAAVMSTLSCQLLVCSSAITEDLYKAFLRKHASQKELVWVGRVMVLVVALVAIALAANPENRVLGLVSYAWAGFGAAFGPVVLFSVMWSRMTRNGALAGMIIGALTVIVWKQFGWLGLYEIIPGFIFGSIGIVVFSLLGKAPSAAMQKRFAEADAHYHSAPPSRLQES</sequence>
<accession>P07117</accession>
<evidence type="ECO:0000255" key="1"/>
<evidence type="ECO:0000269" key="2">
    <source>
    </source>
</evidence>
<evidence type="ECO:0000269" key="3">
    <source>
    </source>
</evidence>
<evidence type="ECO:0000269" key="4">
    <source>
    </source>
</evidence>
<evidence type="ECO:0000269" key="5">
    <source>
    </source>
</evidence>
<evidence type="ECO:0000269" key="6">
    <source>
    </source>
</evidence>
<evidence type="ECO:0000269" key="7">
    <source>
    </source>
</evidence>
<evidence type="ECO:0000269" key="8">
    <source>
    </source>
</evidence>
<evidence type="ECO:0000269" key="9">
    <source>
    </source>
</evidence>
<evidence type="ECO:0000269" key="10">
    <source>
    </source>
</evidence>
<evidence type="ECO:0000269" key="11">
    <source>
    </source>
</evidence>
<evidence type="ECO:0000269" key="12">
    <source>
    </source>
</evidence>
<evidence type="ECO:0000269" key="13">
    <source>
    </source>
</evidence>
<evidence type="ECO:0000303" key="14">
    <source>
    </source>
</evidence>
<evidence type="ECO:0000303" key="15">
    <source>
    </source>
</evidence>
<evidence type="ECO:0000305" key="16"/>
<evidence type="ECO:0000305" key="17">
    <source>
    </source>
</evidence>
<protein>
    <recommendedName>
        <fullName evidence="16">Sodium/proline symporter</fullName>
    </recommendedName>
    <alternativeName>
        <fullName evidence="15">Proline carrier</fullName>
    </alternativeName>
    <alternativeName>
        <fullName>Proline permease</fullName>
    </alternativeName>
    <alternativeName>
        <fullName evidence="14">Propionate transporter</fullName>
    </alternativeName>
</protein>
<proteinExistence type="evidence at protein level"/>
<organism>
    <name type="scientific">Escherichia coli (strain K12)</name>
    <dbReference type="NCBI Taxonomy" id="83333"/>
    <lineage>
        <taxon>Bacteria</taxon>
        <taxon>Pseudomonadati</taxon>
        <taxon>Pseudomonadota</taxon>
        <taxon>Gammaproteobacteria</taxon>
        <taxon>Enterobacterales</taxon>
        <taxon>Enterobacteriaceae</taxon>
        <taxon>Escherichia</taxon>
    </lineage>
</organism>
<reference key="1">
    <citation type="journal article" date="1987" name="Mol. Gen. Genet.">
        <title>Nucleotide sequence of putP, the proline carrier gene of Escherichia coli K12.</title>
        <authorList>
            <person name="Nakao T."/>
            <person name="Yamato I."/>
            <person name="Anraku Y."/>
        </authorList>
    </citation>
    <scope>NUCLEOTIDE SEQUENCE [GENOMIC DNA]</scope>
    <source>
        <strain>K12</strain>
    </source>
</reference>
<reference key="2">
    <citation type="journal article" date="1996" name="DNA Res.">
        <title>A 718-kb DNA sequence of the Escherichia coli K-12 genome corresponding to the 12.7-28.0 min region on the linkage map.</title>
        <authorList>
            <person name="Oshima T."/>
            <person name="Aiba H."/>
            <person name="Baba T."/>
            <person name="Fujita K."/>
            <person name="Hayashi K."/>
            <person name="Honjo A."/>
            <person name="Ikemoto K."/>
            <person name="Inada T."/>
            <person name="Itoh T."/>
            <person name="Kajihara M."/>
            <person name="Kanai K."/>
            <person name="Kashimoto K."/>
            <person name="Kimura S."/>
            <person name="Kitagawa M."/>
            <person name="Makino K."/>
            <person name="Masuda S."/>
            <person name="Miki T."/>
            <person name="Mizobuchi K."/>
            <person name="Mori H."/>
            <person name="Motomura K."/>
            <person name="Nakamura Y."/>
            <person name="Nashimoto H."/>
            <person name="Nishio Y."/>
            <person name="Saito N."/>
            <person name="Sampei G."/>
            <person name="Seki Y."/>
            <person name="Tagami H."/>
            <person name="Takemoto K."/>
            <person name="Wada C."/>
            <person name="Yamamoto Y."/>
            <person name="Yano M."/>
            <person name="Horiuchi T."/>
        </authorList>
    </citation>
    <scope>NUCLEOTIDE SEQUENCE [LARGE SCALE GENOMIC DNA]</scope>
    <source>
        <strain>K12 / W3110 / ATCC 27325 / DSM 5911</strain>
    </source>
</reference>
<reference key="3">
    <citation type="journal article" date="1997" name="Science">
        <title>The complete genome sequence of Escherichia coli K-12.</title>
        <authorList>
            <person name="Blattner F.R."/>
            <person name="Plunkett G. III"/>
            <person name="Bloch C.A."/>
            <person name="Perna N.T."/>
            <person name="Burland V."/>
            <person name="Riley M."/>
            <person name="Collado-Vides J."/>
            <person name="Glasner J.D."/>
            <person name="Rode C.K."/>
            <person name="Mayhew G.F."/>
            <person name="Gregor J."/>
            <person name="Davis N.W."/>
            <person name="Kirkpatrick H.A."/>
            <person name="Goeden M.A."/>
            <person name="Rose D.J."/>
            <person name="Mau B."/>
            <person name="Shao Y."/>
        </authorList>
    </citation>
    <scope>NUCLEOTIDE SEQUENCE [LARGE SCALE GENOMIC DNA]</scope>
    <source>
        <strain>K12 / MG1655 / ATCC 47076</strain>
    </source>
</reference>
<reference key="4">
    <citation type="journal article" date="2006" name="Mol. Syst. Biol.">
        <title>Highly accurate genome sequences of Escherichia coli K-12 strains MG1655 and W3110.</title>
        <authorList>
            <person name="Hayashi K."/>
            <person name="Morooka N."/>
            <person name="Yamamoto Y."/>
            <person name="Fujita K."/>
            <person name="Isono K."/>
            <person name="Choi S."/>
            <person name="Ohtsubo E."/>
            <person name="Baba T."/>
            <person name="Wanner B.L."/>
            <person name="Mori H."/>
            <person name="Horiuchi T."/>
        </authorList>
    </citation>
    <scope>NUCLEOTIDE SEQUENCE [LARGE SCALE GENOMIC DNA]</scope>
    <source>
        <strain>K12 / W3110 / ATCC 27325 / DSM 5911</strain>
    </source>
</reference>
<reference key="5">
    <citation type="journal article" date="1992" name="J. Bacteriol.">
        <title>Evolutionary genetics of the proline permease gene (putP) and the control region of the proline utilization operon in populations of Salmonella and Escherichia coli.</title>
        <authorList>
            <person name="Nelson K."/>
            <person name="Selander R.K."/>
        </authorList>
    </citation>
    <scope>NUCLEOTIDE SEQUENCE [GENOMIC DNA] OF 1-489</scope>
    <source>
        <strain>EC14</strain>
    </source>
</reference>
<reference key="6">
    <citation type="journal article" date="1987" name="Mol. Gen. Genet.">
        <title>Nucleotide sequence of putC, the regulatory region for the put regulon of Escherichia coli K12.</title>
        <authorList>
            <person name="Nakao T."/>
            <person name="Yamato I."/>
            <person name="Anraku Y."/>
        </authorList>
    </citation>
    <scope>NUCLEOTIDE SEQUENCE [GENOMIC DNA] OF 1-43</scope>
    <source>
        <strain>K12</strain>
    </source>
</reference>
<reference key="7">
    <citation type="journal article" date="1992" name="Biochim. Biophys. Acta">
        <title>Sodium ion and proline binding sites in the Na+/proline symport carrier of Escherichia coli.</title>
        <authorList>
            <person name="Hanada K."/>
            <person name="Yoshida T."/>
            <person name="Yamato I."/>
            <person name="Anraku Y."/>
        </authorList>
    </citation>
    <scope>PROTEIN SEQUENCE OF 1-6</scope>
    <scope>FUNCTION</scope>
    <scope>CATALYTIC ACTIVITY</scope>
    <scope>ACTIVITY REGULATION</scope>
    <scope>SODIUM/PROLINE BINDING SITE</scope>
    <scope>MUTAGENESIS OF CYS-281; CYS-344 AND CYS-349</scope>
</reference>
<reference key="8">
    <citation type="journal article" date="1985" name="FEBS Lett.">
        <title>Identification of proline carrier in Escherichia coli K-12.</title>
        <authorList>
            <person name="Hanada K."/>
            <person name="Yamato I."/>
            <person name="Anraku Y."/>
        </authorList>
    </citation>
    <scope>SUBCELLULAR LOCATION</scope>
    <source>
        <strain>K12</strain>
    </source>
</reference>
<reference key="9">
    <citation type="journal article" date="1986" name="J. Biol. Chem.">
        <title>Solubilization and functional reconstitution of the proline transport system of Escherichia coli.</title>
        <authorList>
            <person name="Chen C.C."/>
            <person name="Wilson T.H."/>
        </authorList>
    </citation>
    <scope>FUNCTION</scope>
    <scope>CATALYTIC ACTIVITY</scope>
    <scope>ACTIVITY REGULATION</scope>
    <scope>BIOPHYSICOCHEMICAL PROPERTIES</scope>
    <scope>SUBCELLULAR LOCATION</scope>
    <source>
        <strain>K12</strain>
    </source>
</reference>
<reference key="10">
    <citation type="journal article" date="1986" name="Mol. Gen. Genet.">
        <title>Genetic and physical characterization of putP, the proline carrier gene of Escherichia coli K12.</title>
        <authorList>
            <person name="Mogi T."/>
            <person name="Yamamoto H."/>
            <person name="Nakao T."/>
            <person name="Yamato I."/>
            <person name="Anraku Y."/>
        </authorList>
    </citation>
    <scope>SUBCELLULAR LOCATION</scope>
    <scope>DISRUPTION PHENOTYPE</scope>
    <source>
        <strain>K12</strain>
    </source>
</reference>
<reference key="11">
    <citation type="journal article" date="1988" name="J. Biol. Chem.">
        <title>Site-specific alteration of cysteine 281, cysteine 344, and cysteine 349 in the proline carrier of Escherichia coli.</title>
        <authorList>
            <person name="Yamato I."/>
            <person name="Anraku Y."/>
        </authorList>
    </citation>
    <scope>ACTIVITY REGULATION</scope>
    <scope>MUTAGENESIS OF CYS-281; CYS-344 AND CYS-349</scope>
</reference>
<reference key="12">
    <citation type="journal article" date="1988" name="J. Bacteriol.">
        <title>Proline carrier mutant of Escherichia coli K-12 with altered cation sensitivity of substrate-binding activity: cloning, biochemical characterization, and identification of the mutation.</title>
        <authorList>
            <person name="Ohsawa M."/>
            <person name="Mogi T."/>
            <person name="Yamamoto H."/>
            <person name="Yamato I."/>
            <person name="Anraku Y."/>
        </authorList>
    </citation>
    <scope>MUTAGENESIS OF ARG-257</scope>
</reference>
<reference key="13">
    <citation type="journal article" date="1994" name="J. Biol. Chem.">
        <title>Site-specific alteration of arginine 376, the unique positively charged amino acid residue in the mid-membrane-spanning regions of the proline carrier of Escherichia coli.</title>
        <authorList>
            <person name="Yamato I."/>
            <person name="Kotani M."/>
            <person name="Oka Y."/>
            <person name="Anraku Y."/>
        </authorList>
    </citation>
    <scope>MUTAGENESIS OF ARG-376</scope>
</reference>
<reference key="14">
    <citation type="journal article" date="1998" name="Biochemistry">
        <title>Unidirectional reconstitution and characterization of purified Na+/proline transporter of Escherichia coli.</title>
        <authorList>
            <person name="Jung H."/>
            <person name="Tebbe S."/>
            <person name="Schmid R."/>
            <person name="Jung K."/>
        </authorList>
    </citation>
    <scope>FUNCTION</scope>
    <scope>CATALYTIC ACTIVITY</scope>
    <scope>BIOPHYSICOCHEMICAL PROPERTIES</scope>
</reference>
<reference key="15">
    <citation type="journal article" date="1998" name="J. Biol. Chem.">
        <title>Topology of the Na+/proline transporter of Escherichia coli.</title>
        <authorList>
            <person name="Jung H."/>
            <person name="Ruebenhagen R."/>
            <person name="Tebbe S."/>
            <person name="Leifker K."/>
            <person name="Tholema N."/>
            <person name="Quick M."/>
            <person name="Schmid R."/>
        </authorList>
    </citation>
    <scope>SUBCELLULAR LOCATION</scope>
    <scope>TOPOLOGY</scope>
</reference>
<reference key="16">
    <citation type="journal article" date="2005" name="J. Biol. Chem.">
        <title>Protein complexes of the Escherichia coli cell envelope.</title>
        <authorList>
            <person name="Stenberg F."/>
            <person name="Chovanec P."/>
            <person name="Maslen S.L."/>
            <person name="Robinson C.V."/>
            <person name="Ilag L."/>
            <person name="von Heijne G."/>
            <person name="Daley D.O."/>
        </authorList>
    </citation>
    <scope>SUBUNIT</scope>
    <scope>SUBCELLULAR LOCATION</scope>
    <source>
        <strain>BL21-DE3</strain>
    </source>
</reference>
<reference key="17">
    <citation type="journal article" date="2005" name="Science">
        <title>Global topology analysis of the Escherichia coli inner membrane proteome.</title>
        <authorList>
            <person name="Daley D.O."/>
            <person name="Rapp M."/>
            <person name="Granseth E."/>
            <person name="Melen K."/>
            <person name="Drew D."/>
            <person name="von Heijne G."/>
        </authorList>
    </citation>
    <scope>TOPOLOGY [LARGE SCALE ANALYSIS]</scope>
    <source>
        <strain>K12 / MG1655 / ATCC 47076</strain>
    </source>
</reference>
<reference key="18">
    <citation type="journal article" date="2006" name="Proc. Natl. Acad. Sci. U.S.A.">
        <title>Systems approach to refining genome annotation.</title>
        <authorList>
            <person name="Reed J.L."/>
            <person name="Patel T.R."/>
            <person name="Chen K.H."/>
            <person name="Joyce A.R."/>
            <person name="Applebee M.K."/>
            <person name="Herring C.D."/>
            <person name="Bui O.T."/>
            <person name="Knight E.M."/>
            <person name="Fong S.S."/>
            <person name="Palsson B.O."/>
        </authorList>
    </citation>
    <scope>FUNCTION AS A PROPIONATE TRANSPORTER</scope>
    <scope>ROLE IN PROPIONATE UTILIZATION</scope>
    <scope>DISRUPTION PHENOTYPE</scope>
    <scope>INDUCTION</scope>
</reference>
<gene>
    <name type="primary">putP</name>
    <name type="ordered locus">b1015</name>
    <name type="ordered locus">JW1001</name>
</gene>
<feature type="chain" id="PRO_0000105398" description="Sodium/proline symporter">
    <location>
        <begin position="1"/>
        <end position="502"/>
    </location>
</feature>
<feature type="topological domain" description="Periplasmic" evidence="13">
    <location>
        <begin position="1"/>
        <end position="5"/>
    </location>
</feature>
<feature type="transmembrane region" description="Helical" evidence="1">
    <location>
        <begin position="6"/>
        <end position="26"/>
    </location>
</feature>
<feature type="topological domain" description="Cytoplasmic" evidence="13">
    <location>
        <begin position="27"/>
        <end position="41"/>
    </location>
</feature>
<feature type="transmembrane region" description="Helical" evidence="1">
    <location>
        <begin position="42"/>
        <end position="62"/>
    </location>
</feature>
<feature type="topological domain" description="Periplasmic" evidence="13">
    <location>
        <begin position="63"/>
        <end position="67"/>
    </location>
</feature>
<feature type="transmembrane region" description="Helical" evidence="1">
    <location>
        <begin position="68"/>
        <end position="88"/>
    </location>
</feature>
<feature type="topological domain" description="Cytoplasmic" evidence="13">
    <location>
        <begin position="89"/>
        <end position="126"/>
    </location>
</feature>
<feature type="transmembrane region" description="Helical" evidence="1">
    <location>
        <begin position="127"/>
        <end position="147"/>
    </location>
</feature>
<feature type="topological domain" description="Periplasmic" evidence="13">
    <location>
        <begin position="148"/>
        <end position="162"/>
    </location>
</feature>
<feature type="transmembrane region" description="Helical" evidence="1">
    <location>
        <begin position="163"/>
        <end position="183"/>
    </location>
</feature>
<feature type="topological domain" description="Cytoplasmic" evidence="13">
    <location>
        <begin position="184"/>
        <end position="192"/>
    </location>
</feature>
<feature type="transmembrane region" description="Helical" evidence="1">
    <location>
        <begin position="193"/>
        <end position="213"/>
    </location>
</feature>
<feature type="topological domain" description="Periplasmic" evidence="13">
    <location>
        <begin position="214"/>
        <end position="234"/>
    </location>
</feature>
<feature type="transmembrane region" description="Helical" evidence="1">
    <location>
        <begin position="235"/>
        <end position="255"/>
    </location>
</feature>
<feature type="topological domain" description="Cytoplasmic" evidence="13">
    <location>
        <begin position="256"/>
        <end position="275"/>
    </location>
</feature>
<feature type="transmembrane region" description="Helical" evidence="1">
    <location>
        <begin position="276"/>
        <end position="296"/>
    </location>
</feature>
<feature type="topological domain" description="Periplasmic" evidence="13">
    <location>
        <begin position="297"/>
        <end position="319"/>
    </location>
</feature>
<feature type="transmembrane region" description="Helical" evidence="1">
    <location>
        <begin position="320"/>
        <end position="340"/>
    </location>
</feature>
<feature type="topological domain" description="Cytoplasmic" evidence="13">
    <location>
        <begin position="341"/>
        <end position="370"/>
    </location>
</feature>
<feature type="transmembrane region" description="Helical" evidence="1">
    <location>
        <begin position="371"/>
        <end position="391"/>
    </location>
</feature>
<feature type="topological domain" description="Periplasmic" evidence="13">
    <location>
        <begin position="392"/>
        <end position="397"/>
    </location>
</feature>
<feature type="transmembrane region" description="Helical" evidence="1">
    <location>
        <begin position="398"/>
        <end position="418"/>
    </location>
</feature>
<feature type="topological domain" description="Cytoplasmic" evidence="13">
    <location>
        <begin position="419"/>
        <end position="427"/>
    </location>
</feature>
<feature type="transmembrane region" description="Helical" evidence="1">
    <location>
        <begin position="428"/>
        <end position="448"/>
    </location>
</feature>
<feature type="transmembrane region" description="Helical" evidence="1">
    <location>
        <begin position="449"/>
        <end position="469"/>
    </location>
</feature>
<feature type="topological domain" description="Cytoplasmic" evidence="3 13">
    <location>
        <begin position="470"/>
        <end position="502"/>
    </location>
</feature>
<feature type="region of interest" description="Hydrophilic">
    <location>
        <begin position="27"/>
        <end position="66"/>
    </location>
</feature>
<feature type="region of interest" description="Hydrophilic">
    <location>
        <begin position="88"/>
        <end position="124"/>
    </location>
</feature>
<feature type="region of interest" description="Hydrophilic">
    <location>
        <begin position="151"/>
        <end position="162"/>
    </location>
</feature>
<feature type="region of interest" description="Hydrophilic">
    <location>
        <begin position="185"/>
        <end position="189"/>
    </location>
</feature>
<feature type="region of interest" description="Hydrophilic">
    <location>
        <begin position="214"/>
        <end position="231"/>
    </location>
</feature>
<feature type="region of interest" description="Hydrophilic">
    <location>
        <begin position="249"/>
        <end position="274"/>
    </location>
</feature>
<feature type="region of interest" description="Hydrophilic">
    <location>
        <begin position="296"/>
        <end position="319"/>
    </location>
</feature>
<feature type="region of interest" description="Hydrophilic">
    <location>
        <begin position="341"/>
        <end position="370"/>
    </location>
</feature>
<feature type="region of interest" description="Hydrophilic">
    <location>
        <begin position="392"/>
        <end position="397"/>
    </location>
</feature>
<feature type="region of interest" description="Hydrophilic">
    <location>
        <begin position="424"/>
        <end position="430"/>
    </location>
</feature>
<feature type="region of interest" description="Hydrophilic">
    <location>
        <begin position="446"/>
        <end position="448"/>
    </location>
</feature>
<feature type="region of interest" description="Hydrophilic">
    <location>
        <begin position="476"/>
        <end position="502"/>
    </location>
</feature>
<feature type="site" description="Involved in high-affinity binding for sodium and proline" evidence="17">
    <location>
        <position position="344"/>
    </location>
</feature>
<feature type="mutagenesis site" description="Sodium-independent binding affinity for proline." evidence="7">
    <original>R</original>
    <variation>C</variation>
    <location>
        <position position="257"/>
    </location>
</feature>
<feature type="mutagenesis site" description="Does not affect proline uptake activity. Confers resistance to N-ethylmaleimide. Na(+)-dependent proline binding activity is similar to wild-type carrier." evidence="2 8">
    <original>C</original>
    <variation>S</variation>
    <location>
        <position position="281"/>
    </location>
</feature>
<feature type="mutagenesis site" description="Small decrease in proline uptake activity. Confers resistance to N-ethylmaleimide. Exhibits low Na(+)-dependent proline binding." evidence="2 8">
    <original>C</original>
    <variation>S</variation>
    <location>
        <position position="344"/>
    </location>
</feature>
<feature type="mutagenesis site" description="Does not affect proline uptake activity. Sensitive to N-ethylmaleimide. Na(+)-dependent proline binding activity is similar to wild-type carrier." evidence="2 8">
    <original>C</original>
    <variation>S</variation>
    <location>
        <position position="349"/>
    </location>
</feature>
<feature type="mutagenesis site" description="No change in activity." evidence="11">
    <original>R</original>
    <variation>E</variation>
    <variation>Q</variation>
    <location>
        <position position="376"/>
    </location>
</feature>
<feature type="mutagenesis site" description="Loss of activity." evidence="11">
    <original>R</original>
    <variation>K</variation>
    <location>
        <position position="376"/>
    </location>
</feature>